<keyword id="KW-0021">Allosteric enzyme</keyword>
<keyword id="KW-0067">ATP-binding</keyword>
<keyword id="KW-0319">Glycerol metabolism</keyword>
<keyword id="KW-0418">Kinase</keyword>
<keyword id="KW-0479">Metal-binding</keyword>
<keyword id="KW-0547">Nucleotide-binding</keyword>
<keyword id="KW-0808">Transferase</keyword>
<keyword id="KW-0862">Zinc</keyword>
<protein>
    <recommendedName>
        <fullName evidence="1">Glycerol kinase</fullName>
        <ecNumber evidence="1">2.7.1.30</ecNumber>
    </recommendedName>
    <alternativeName>
        <fullName evidence="1">ATP:glycerol 3-phosphotransferase</fullName>
    </alternativeName>
    <alternativeName>
        <fullName evidence="1">Glycerokinase</fullName>
        <shortName evidence="1">GK</shortName>
    </alternativeName>
</protein>
<name>GLPK_ECO5E</name>
<comment type="function">
    <text evidence="1">Key enzyme in the regulation of glycerol uptake and metabolism. Catalyzes the phosphorylation of glycerol to yield sn-glycerol 3-phosphate.</text>
</comment>
<comment type="catalytic activity">
    <reaction evidence="1">
        <text>glycerol + ATP = sn-glycerol 3-phosphate + ADP + H(+)</text>
        <dbReference type="Rhea" id="RHEA:21644"/>
        <dbReference type="ChEBI" id="CHEBI:15378"/>
        <dbReference type="ChEBI" id="CHEBI:17754"/>
        <dbReference type="ChEBI" id="CHEBI:30616"/>
        <dbReference type="ChEBI" id="CHEBI:57597"/>
        <dbReference type="ChEBI" id="CHEBI:456216"/>
        <dbReference type="EC" id="2.7.1.30"/>
    </reaction>
</comment>
<comment type="activity regulation">
    <text evidence="1">Activity of this regulatory enzyme is affected by several metabolites. Allosterically and non-competitively inhibited by fructose 1,6-bisphosphate (FBP) and unphosphorylated phosphocarrier protein EIIA-Glc (III-Glc), an integral component of the bacterial phosphotransferase (PTS) system.</text>
</comment>
<comment type="pathway">
    <text evidence="1">Polyol metabolism; glycerol degradation via glycerol kinase pathway; sn-glycerol 3-phosphate from glycerol: step 1/1.</text>
</comment>
<comment type="subunit">
    <text evidence="1">Homotetramer and homodimer (in equilibrium). Heterodimer with EIIA-Glc. Binds 1 zinc ion per glycerol kinase EIIA-Glc dimer. The zinc ion is important for dimerization.</text>
</comment>
<comment type="similarity">
    <text evidence="1">Belongs to the FGGY kinase family.</text>
</comment>
<proteinExistence type="inferred from homology"/>
<reference key="1">
    <citation type="journal article" date="2011" name="Proc. Natl. Acad. Sci. U.S.A.">
        <title>Genomic anatomy of Escherichia coli O157:H7 outbreaks.</title>
        <authorList>
            <person name="Eppinger M."/>
            <person name="Mammel M.K."/>
            <person name="Leclerc J.E."/>
            <person name="Ravel J."/>
            <person name="Cebula T.A."/>
        </authorList>
    </citation>
    <scope>NUCLEOTIDE SEQUENCE [LARGE SCALE GENOMIC DNA]</scope>
    <source>
        <strain>EC4115 / EHEC</strain>
    </source>
</reference>
<feature type="chain" id="PRO_1000098729" description="Glycerol kinase">
    <location>
        <begin position="1"/>
        <end position="502"/>
    </location>
</feature>
<feature type="binding site" evidence="1">
    <location>
        <position position="14"/>
    </location>
    <ligand>
        <name>ADP</name>
        <dbReference type="ChEBI" id="CHEBI:456216"/>
    </ligand>
</feature>
<feature type="binding site" evidence="1">
    <location>
        <position position="14"/>
    </location>
    <ligand>
        <name>ATP</name>
        <dbReference type="ChEBI" id="CHEBI:30616"/>
    </ligand>
</feature>
<feature type="binding site" evidence="1">
    <location>
        <position position="14"/>
    </location>
    <ligand>
        <name>sn-glycerol 3-phosphate</name>
        <dbReference type="ChEBI" id="CHEBI:57597"/>
    </ligand>
</feature>
<feature type="binding site" evidence="1">
    <location>
        <position position="15"/>
    </location>
    <ligand>
        <name>ATP</name>
        <dbReference type="ChEBI" id="CHEBI:30616"/>
    </ligand>
</feature>
<feature type="binding site" evidence="1">
    <location>
        <position position="16"/>
    </location>
    <ligand>
        <name>ATP</name>
        <dbReference type="ChEBI" id="CHEBI:30616"/>
    </ligand>
</feature>
<feature type="binding site" evidence="1">
    <location>
        <position position="18"/>
    </location>
    <ligand>
        <name>ADP</name>
        <dbReference type="ChEBI" id="CHEBI:456216"/>
    </ligand>
</feature>
<feature type="binding site" evidence="1">
    <location>
        <position position="84"/>
    </location>
    <ligand>
        <name>glycerol</name>
        <dbReference type="ChEBI" id="CHEBI:17754"/>
    </ligand>
</feature>
<feature type="binding site" evidence="1">
    <location>
        <position position="84"/>
    </location>
    <ligand>
        <name>sn-glycerol 3-phosphate</name>
        <dbReference type="ChEBI" id="CHEBI:57597"/>
    </ligand>
</feature>
<feature type="binding site" evidence="1">
    <location>
        <position position="85"/>
    </location>
    <ligand>
        <name>glycerol</name>
        <dbReference type="ChEBI" id="CHEBI:17754"/>
    </ligand>
</feature>
<feature type="binding site" evidence="1">
    <location>
        <position position="85"/>
    </location>
    <ligand>
        <name>sn-glycerol 3-phosphate</name>
        <dbReference type="ChEBI" id="CHEBI:57597"/>
    </ligand>
</feature>
<feature type="binding site" evidence="1">
    <location>
        <position position="136"/>
    </location>
    <ligand>
        <name>glycerol</name>
        <dbReference type="ChEBI" id="CHEBI:17754"/>
    </ligand>
</feature>
<feature type="binding site" evidence="1">
    <location>
        <position position="136"/>
    </location>
    <ligand>
        <name>sn-glycerol 3-phosphate</name>
        <dbReference type="ChEBI" id="CHEBI:57597"/>
    </ligand>
</feature>
<feature type="binding site" evidence="1">
    <location>
        <position position="246"/>
    </location>
    <ligand>
        <name>glycerol</name>
        <dbReference type="ChEBI" id="CHEBI:17754"/>
    </ligand>
</feature>
<feature type="binding site" evidence="1">
    <location>
        <position position="246"/>
    </location>
    <ligand>
        <name>sn-glycerol 3-phosphate</name>
        <dbReference type="ChEBI" id="CHEBI:57597"/>
    </ligand>
</feature>
<feature type="binding site" evidence="1">
    <location>
        <position position="247"/>
    </location>
    <ligand>
        <name>glycerol</name>
        <dbReference type="ChEBI" id="CHEBI:17754"/>
    </ligand>
</feature>
<feature type="binding site" evidence="1">
    <location>
        <position position="268"/>
    </location>
    <ligand>
        <name>ADP</name>
        <dbReference type="ChEBI" id="CHEBI:456216"/>
    </ligand>
</feature>
<feature type="binding site" evidence="1">
    <location>
        <position position="268"/>
    </location>
    <ligand>
        <name>ATP</name>
        <dbReference type="ChEBI" id="CHEBI:30616"/>
    </ligand>
</feature>
<feature type="binding site" evidence="1">
    <location>
        <position position="311"/>
    </location>
    <ligand>
        <name>ADP</name>
        <dbReference type="ChEBI" id="CHEBI:456216"/>
    </ligand>
</feature>
<feature type="binding site" evidence="1">
    <location>
        <position position="311"/>
    </location>
    <ligand>
        <name>ATP</name>
        <dbReference type="ChEBI" id="CHEBI:30616"/>
    </ligand>
</feature>
<feature type="binding site" evidence="1">
    <location>
        <position position="315"/>
    </location>
    <ligand>
        <name>ATP</name>
        <dbReference type="ChEBI" id="CHEBI:30616"/>
    </ligand>
</feature>
<feature type="binding site" evidence="1">
    <location>
        <position position="412"/>
    </location>
    <ligand>
        <name>ADP</name>
        <dbReference type="ChEBI" id="CHEBI:456216"/>
    </ligand>
</feature>
<feature type="binding site" evidence="1">
    <location>
        <position position="412"/>
    </location>
    <ligand>
        <name>ATP</name>
        <dbReference type="ChEBI" id="CHEBI:30616"/>
    </ligand>
</feature>
<feature type="binding site" evidence="1">
    <location>
        <position position="416"/>
    </location>
    <ligand>
        <name>ADP</name>
        <dbReference type="ChEBI" id="CHEBI:456216"/>
    </ligand>
</feature>
<gene>
    <name evidence="1" type="primary">glpK</name>
    <name type="ordered locus">ECH74115_5381</name>
</gene>
<evidence type="ECO:0000255" key="1">
    <source>
        <dbReference type="HAMAP-Rule" id="MF_00186"/>
    </source>
</evidence>
<organism>
    <name type="scientific">Escherichia coli O157:H7 (strain EC4115 / EHEC)</name>
    <dbReference type="NCBI Taxonomy" id="444450"/>
    <lineage>
        <taxon>Bacteria</taxon>
        <taxon>Pseudomonadati</taxon>
        <taxon>Pseudomonadota</taxon>
        <taxon>Gammaproteobacteria</taxon>
        <taxon>Enterobacterales</taxon>
        <taxon>Enterobacteriaceae</taxon>
        <taxon>Escherichia</taxon>
    </lineage>
</organism>
<dbReference type="EC" id="2.7.1.30" evidence="1"/>
<dbReference type="EMBL" id="CP001164">
    <property type="protein sequence ID" value="ACI35872.1"/>
    <property type="molecule type" value="Genomic_DNA"/>
</dbReference>
<dbReference type="RefSeq" id="WP_000136788.1">
    <property type="nucleotide sequence ID" value="NC_011353.1"/>
</dbReference>
<dbReference type="SMR" id="B5YZ64"/>
<dbReference type="GeneID" id="75169366"/>
<dbReference type="KEGG" id="ecf:ECH74115_5381"/>
<dbReference type="HOGENOM" id="CLU_009281_2_3_6"/>
<dbReference type="UniPathway" id="UPA00618">
    <property type="reaction ID" value="UER00672"/>
</dbReference>
<dbReference type="GO" id="GO:0005829">
    <property type="term" value="C:cytosol"/>
    <property type="evidence" value="ECO:0007669"/>
    <property type="project" value="TreeGrafter"/>
</dbReference>
<dbReference type="GO" id="GO:0005524">
    <property type="term" value="F:ATP binding"/>
    <property type="evidence" value="ECO:0007669"/>
    <property type="project" value="UniProtKB-UniRule"/>
</dbReference>
<dbReference type="GO" id="GO:0004370">
    <property type="term" value="F:glycerol kinase activity"/>
    <property type="evidence" value="ECO:0000250"/>
    <property type="project" value="UniProtKB"/>
</dbReference>
<dbReference type="GO" id="GO:0046872">
    <property type="term" value="F:metal ion binding"/>
    <property type="evidence" value="ECO:0007669"/>
    <property type="project" value="UniProtKB-KW"/>
</dbReference>
<dbReference type="GO" id="GO:0019563">
    <property type="term" value="P:glycerol catabolic process"/>
    <property type="evidence" value="ECO:0007669"/>
    <property type="project" value="UniProtKB-UniRule"/>
</dbReference>
<dbReference type="GO" id="GO:0006071">
    <property type="term" value="P:glycerol metabolic process"/>
    <property type="evidence" value="ECO:0000250"/>
    <property type="project" value="UniProtKB"/>
</dbReference>
<dbReference type="GO" id="GO:0006072">
    <property type="term" value="P:glycerol-3-phosphate metabolic process"/>
    <property type="evidence" value="ECO:0007669"/>
    <property type="project" value="InterPro"/>
</dbReference>
<dbReference type="CDD" id="cd07786">
    <property type="entry name" value="FGGY_EcGK_like"/>
    <property type="match status" value="1"/>
</dbReference>
<dbReference type="FunFam" id="3.30.420.40:FF:000007">
    <property type="entry name" value="Glycerol kinase"/>
    <property type="match status" value="1"/>
</dbReference>
<dbReference type="FunFam" id="3.30.420.40:FF:000008">
    <property type="entry name" value="Glycerol kinase"/>
    <property type="match status" value="1"/>
</dbReference>
<dbReference type="Gene3D" id="3.30.420.40">
    <property type="match status" value="2"/>
</dbReference>
<dbReference type="HAMAP" id="MF_00186">
    <property type="entry name" value="Glycerol_kin"/>
    <property type="match status" value="1"/>
</dbReference>
<dbReference type="InterPro" id="IPR043129">
    <property type="entry name" value="ATPase_NBD"/>
</dbReference>
<dbReference type="InterPro" id="IPR000577">
    <property type="entry name" value="Carb_kinase_FGGY"/>
</dbReference>
<dbReference type="InterPro" id="IPR018483">
    <property type="entry name" value="Carb_kinase_FGGY_CS"/>
</dbReference>
<dbReference type="InterPro" id="IPR018485">
    <property type="entry name" value="FGGY_C"/>
</dbReference>
<dbReference type="InterPro" id="IPR018484">
    <property type="entry name" value="FGGY_N"/>
</dbReference>
<dbReference type="InterPro" id="IPR005999">
    <property type="entry name" value="Glycerol_kin"/>
</dbReference>
<dbReference type="NCBIfam" id="TIGR01311">
    <property type="entry name" value="glycerol_kin"/>
    <property type="match status" value="1"/>
</dbReference>
<dbReference type="NCBIfam" id="NF000756">
    <property type="entry name" value="PRK00047.1"/>
    <property type="match status" value="1"/>
</dbReference>
<dbReference type="PANTHER" id="PTHR10196:SF69">
    <property type="entry name" value="GLYCEROL KINASE"/>
    <property type="match status" value="1"/>
</dbReference>
<dbReference type="PANTHER" id="PTHR10196">
    <property type="entry name" value="SUGAR KINASE"/>
    <property type="match status" value="1"/>
</dbReference>
<dbReference type="Pfam" id="PF02782">
    <property type="entry name" value="FGGY_C"/>
    <property type="match status" value="1"/>
</dbReference>
<dbReference type="Pfam" id="PF00370">
    <property type="entry name" value="FGGY_N"/>
    <property type="match status" value="1"/>
</dbReference>
<dbReference type="PIRSF" id="PIRSF000538">
    <property type="entry name" value="GlpK"/>
    <property type="match status" value="1"/>
</dbReference>
<dbReference type="SUPFAM" id="SSF53067">
    <property type="entry name" value="Actin-like ATPase domain"/>
    <property type="match status" value="2"/>
</dbReference>
<dbReference type="PROSITE" id="PS00933">
    <property type="entry name" value="FGGY_KINASES_1"/>
    <property type="match status" value="1"/>
</dbReference>
<dbReference type="PROSITE" id="PS00445">
    <property type="entry name" value="FGGY_KINASES_2"/>
    <property type="match status" value="1"/>
</dbReference>
<accession>B5YZ64</accession>
<sequence length="502" mass="56231">MTEKKYIVALDQGTTSSRAVVMDHDANIISVSQREFEQIYPKPGWVEHDPMEIWATQSSTLVEVLAKADISSDQIAAIGITNQRETTIVWEKETGKPIYNAIVWQCRRTAEICEHLKRDGLEDYIRSNTGLVIDPYFSGTKVKWILDHVEGSRERARRGELLFGTVDTWLIWKMTQGRVHVTDYTNASRTMLFNIHTLDWDDKMLEVLDIPREMLPEVRRSSEVYGQTNIGGKGGTRIPISGIAGDQQAALFGQLCVKEGMAKNTYGTGCFMLMNTGEKAVKSENGLLTTIACGPTGEVNYALEGAVFMAGASIQWLRDEMKLINDAYDSEYFATKVQNTNGVYVVPAFTGLGAPYWDPYARGAIFGLTRGVNANHIIRATLESIAYQTRDVLEAMQADSGIRLHALRVDGGAVANNFLMQFQSDILGTRVERPEVREVTALGAAYLAGLAVGFWQNLDELQEKAVIEREFRPGIETTERNYRYAGWKKAVKRAMAWEEHDE</sequence>